<protein>
    <recommendedName>
        <fullName>Probable nitrate/nitrite transporter NarK2</fullName>
    </recommendedName>
</protein>
<name>NARK2_MYCTU</name>
<accession>P9WJY7</accession>
<accession>L0TAG9</accession>
<accession>P71995</accession>
<accession>Q7D820</accession>
<proteinExistence type="evidence at protein level"/>
<evidence type="ECO:0000255" key="1"/>
<evidence type="ECO:0000269" key="2">
    <source>
    </source>
</evidence>
<evidence type="ECO:0000269" key="3">
    <source>
    </source>
</evidence>
<evidence type="ECO:0000269" key="4">
    <source>
    </source>
</evidence>
<evidence type="ECO:0000269" key="5">
    <source>
    </source>
</evidence>
<evidence type="ECO:0000269" key="6">
    <source>
    </source>
</evidence>
<evidence type="ECO:0000269" key="7">
    <source>
    </source>
</evidence>
<evidence type="ECO:0000305" key="8"/>
<feature type="chain" id="PRO_0000392910" description="Probable nitrate/nitrite transporter NarK2">
    <location>
        <begin position="1"/>
        <end position="395"/>
    </location>
</feature>
<feature type="transmembrane region" description="Helical" evidence="1">
    <location>
        <begin position="8"/>
        <end position="28"/>
    </location>
</feature>
<feature type="transmembrane region" description="Helical" evidence="1">
    <location>
        <begin position="45"/>
        <end position="65"/>
    </location>
</feature>
<feature type="transmembrane region" description="Helical" evidence="1">
    <location>
        <begin position="72"/>
        <end position="92"/>
    </location>
</feature>
<feature type="transmembrane region" description="Helical" evidence="1">
    <location>
        <begin position="98"/>
        <end position="118"/>
    </location>
</feature>
<feature type="transmembrane region" description="Helical" evidence="1">
    <location>
        <begin position="131"/>
        <end position="151"/>
    </location>
</feature>
<feature type="transmembrane region" description="Helical" evidence="1">
    <location>
        <begin position="157"/>
        <end position="177"/>
    </location>
</feature>
<feature type="transmembrane region" description="Helical" evidence="1">
    <location>
        <begin position="205"/>
        <end position="225"/>
    </location>
</feature>
<feature type="transmembrane region" description="Helical" evidence="1">
    <location>
        <begin position="244"/>
        <end position="266"/>
    </location>
</feature>
<feature type="transmembrane region" description="Helical" evidence="1">
    <location>
        <begin position="274"/>
        <end position="294"/>
    </location>
</feature>
<feature type="transmembrane region" description="Helical" evidence="1">
    <location>
        <begin position="301"/>
        <end position="321"/>
    </location>
</feature>
<feature type="transmembrane region" description="Helical" evidence="1">
    <location>
        <begin position="333"/>
        <end position="353"/>
    </location>
</feature>
<feature type="transmembrane region" description="Helical" evidence="1">
    <location>
        <begin position="365"/>
        <end position="385"/>
    </location>
</feature>
<organism>
    <name type="scientific">Mycobacterium tuberculosis (strain ATCC 25618 / H37Rv)</name>
    <dbReference type="NCBI Taxonomy" id="83332"/>
    <lineage>
        <taxon>Bacteria</taxon>
        <taxon>Bacillati</taxon>
        <taxon>Actinomycetota</taxon>
        <taxon>Actinomycetes</taxon>
        <taxon>Mycobacteriales</taxon>
        <taxon>Mycobacteriaceae</taxon>
        <taxon>Mycobacterium</taxon>
        <taxon>Mycobacterium tuberculosis complex</taxon>
    </lineage>
</organism>
<gene>
    <name type="primary">narK2</name>
    <name type="synonym">narK-3</name>
    <name type="ordered locus">Rv1737c</name>
</gene>
<reference key="1">
    <citation type="journal article" date="1998" name="Nature">
        <title>Deciphering the biology of Mycobacterium tuberculosis from the complete genome sequence.</title>
        <authorList>
            <person name="Cole S.T."/>
            <person name="Brosch R."/>
            <person name="Parkhill J."/>
            <person name="Garnier T."/>
            <person name="Churcher C.M."/>
            <person name="Harris D.E."/>
            <person name="Gordon S.V."/>
            <person name="Eiglmeier K."/>
            <person name="Gas S."/>
            <person name="Barry C.E. III"/>
            <person name="Tekaia F."/>
            <person name="Badcock K."/>
            <person name="Basham D."/>
            <person name="Brown D."/>
            <person name="Chillingworth T."/>
            <person name="Connor R."/>
            <person name="Davies R.M."/>
            <person name="Devlin K."/>
            <person name="Feltwell T."/>
            <person name="Gentles S."/>
            <person name="Hamlin N."/>
            <person name="Holroyd S."/>
            <person name="Hornsby T."/>
            <person name="Jagels K."/>
            <person name="Krogh A."/>
            <person name="McLean J."/>
            <person name="Moule S."/>
            <person name="Murphy L.D."/>
            <person name="Oliver S."/>
            <person name="Osborne J."/>
            <person name="Quail M.A."/>
            <person name="Rajandream M.A."/>
            <person name="Rogers J."/>
            <person name="Rutter S."/>
            <person name="Seeger K."/>
            <person name="Skelton S."/>
            <person name="Squares S."/>
            <person name="Squares R."/>
            <person name="Sulston J.E."/>
            <person name="Taylor K."/>
            <person name="Whitehead S."/>
            <person name="Barrell B.G."/>
        </authorList>
    </citation>
    <scope>NUCLEOTIDE SEQUENCE [LARGE SCALE GENOMIC DNA]</scope>
    <source>
        <strain>ATCC 25618 / H37Rv</strain>
    </source>
</reference>
<reference key="2">
    <citation type="journal article" date="2001" name="Proc. Natl. Acad. Sci. U.S.A.">
        <title>Regulation of the Mycobacterium tuberculosis hypoxic response gene encoding alpha -crystallin.</title>
        <authorList>
            <person name="Sherman D.R."/>
            <person name="Voskuil M."/>
            <person name="Schnappinger D."/>
            <person name="Liao R."/>
            <person name="Harrell M.I."/>
            <person name="Schoolnik G.K."/>
        </authorList>
    </citation>
    <scope>INDUCTION BY HYPOXIA</scope>
    <source>
        <strain>ATCC 25618 / H37Rv</strain>
    </source>
</reference>
<reference key="3">
    <citation type="journal article" date="2003" name="J. Bacteriol.">
        <title>Role of narK2X and narGHJI in hypoxic upregulation of nitrate reduction by Mycobacterium tuberculosis.</title>
        <authorList>
            <person name="Sohaskey C.D."/>
            <person name="Wayne L.G."/>
        </authorList>
    </citation>
    <scope>INDUCTION BY HYPOXIA</scope>
    <scope>ROLE IN NITRATE REDUCTION</scope>
    <scope>DISRUPTION PHENOTYPE</scope>
    <source>
        <strain>ATCC 25618 / H37Rv</strain>
    </source>
</reference>
<reference key="4">
    <citation type="journal article" date="2003" name="J. Exp. Med.">
        <title>Inhibition of respiration by nitric oxide induces a Mycobacterium tuberculosis dormancy program.</title>
        <authorList>
            <person name="Voskuil M.I."/>
            <person name="Schnappinger D."/>
            <person name="Visconti K.C."/>
            <person name="Harrell M.I."/>
            <person name="Dolganov G.M."/>
            <person name="Sherman D.R."/>
            <person name="Schoolnik G.K."/>
        </authorList>
    </citation>
    <scope>INDUCTION BY NITRIC OXIDE (NO) AND BY HYPOXIA</scope>
    <scope>DORMANCY REGULON</scope>
    <source>
        <strain>ATCC 25618 / H37Rv</strain>
    </source>
</reference>
<reference key="5">
    <citation type="journal article" date="2008" name="Cell Host Microbe">
        <title>Mycobacterium tuberculosis senses host-derived carbon monoxide during macrophage infection.</title>
        <authorList>
            <person name="Shiloh M.U."/>
            <person name="Manzanillo P."/>
            <person name="Cox J.S."/>
        </authorList>
    </citation>
    <scope>INDUCTION BY CARBON MONOXIDE (CO)</scope>
    <source>
        <strain>ATCC 35801 / TMC 107 / Erdman</strain>
    </source>
</reference>
<reference key="6">
    <citation type="journal article" date="2008" name="J. Biol. Chem.">
        <title>Heme oxygenase-1-derived carbon monoxide induces the Mycobacterium tuberculosis dormancy regulon.</title>
        <authorList>
            <person name="Kumar A."/>
            <person name="Deshane J.S."/>
            <person name="Crossman D.K."/>
            <person name="Bolisetty S."/>
            <person name="Yan B.S."/>
            <person name="Kramnik I."/>
            <person name="Agarwal A."/>
            <person name="Steyn A.J."/>
        </authorList>
    </citation>
    <scope>INDUCTION BY CARBON MONOXIDE (CO)</scope>
    <scope>DORMANCY REGULON</scope>
    <source>
        <strain>ATCC 25618 / H37Rv</strain>
    </source>
</reference>
<reference key="7">
    <citation type="journal article" date="2009" name="Clin. Vaccine Immunol.">
        <title>Immunogenicity of novel DosR regulon-encoded candidate antigens of Mycobacterium tuberculosis in three high-burden populations in Africa.</title>
        <authorList>
            <person name="Black G.F."/>
            <person name="Thiel B.A."/>
            <person name="Ota M.O."/>
            <person name="Parida S.K."/>
            <person name="Adegbola R."/>
            <person name="Boom W.H."/>
            <person name="Dockrell H.M."/>
            <person name="Franken K.L."/>
            <person name="Friggen A.H."/>
            <person name="Hill P.C."/>
            <person name="Klein M.R."/>
            <person name="Lalor M.K."/>
            <person name="Mayanja H."/>
            <person name="Schoolnik G."/>
            <person name="Stanley K."/>
            <person name="Weldingh K."/>
            <person name="Kaufmann S.H."/>
            <person name="Walzl G."/>
            <person name="Ottenhoff T.H."/>
        </authorList>
    </citation>
    <scope>BIOTECHNOLOGY</scope>
</reference>
<dbReference type="EMBL" id="AL123456">
    <property type="protein sequence ID" value="CCP44503.1"/>
    <property type="molecule type" value="Genomic_DNA"/>
</dbReference>
<dbReference type="PIR" id="D70688">
    <property type="entry name" value="D70688"/>
</dbReference>
<dbReference type="RefSeq" id="NP_216253.1">
    <property type="nucleotide sequence ID" value="NC_000962.3"/>
</dbReference>
<dbReference type="SMR" id="P9WJY7"/>
<dbReference type="FunCoup" id="P9WJY7">
    <property type="interactions" value="11"/>
</dbReference>
<dbReference type="STRING" id="83332.Rv1737c"/>
<dbReference type="PaxDb" id="83332-Rv1737c"/>
<dbReference type="GeneID" id="885231"/>
<dbReference type="KEGG" id="mtu:Rv1737c"/>
<dbReference type="KEGG" id="mtv:RVBD_1737c"/>
<dbReference type="TubercuList" id="Rv1737c"/>
<dbReference type="eggNOG" id="COG2223">
    <property type="taxonomic scope" value="Bacteria"/>
</dbReference>
<dbReference type="InParanoid" id="P9WJY7"/>
<dbReference type="OrthoDB" id="9771451at2"/>
<dbReference type="PhylomeDB" id="P9WJY7"/>
<dbReference type="BRENDA" id="7.3.2.4">
    <property type="organism ID" value="3445"/>
</dbReference>
<dbReference type="Proteomes" id="UP000001584">
    <property type="component" value="Chromosome"/>
</dbReference>
<dbReference type="GO" id="GO:0005886">
    <property type="term" value="C:plasma membrane"/>
    <property type="evidence" value="ECO:0007669"/>
    <property type="project" value="UniProtKB-SubCell"/>
</dbReference>
<dbReference type="GO" id="GO:0015112">
    <property type="term" value="F:nitrate transmembrane transporter activity"/>
    <property type="evidence" value="ECO:0007669"/>
    <property type="project" value="InterPro"/>
</dbReference>
<dbReference type="GO" id="GO:0042128">
    <property type="term" value="P:nitrate assimilation"/>
    <property type="evidence" value="ECO:0007669"/>
    <property type="project" value="UniProtKB-KW"/>
</dbReference>
<dbReference type="GO" id="GO:0090352">
    <property type="term" value="P:regulation of nitrate assimilation"/>
    <property type="evidence" value="ECO:0000315"/>
    <property type="project" value="MTBBASE"/>
</dbReference>
<dbReference type="GO" id="GO:0001666">
    <property type="term" value="P:response to hypoxia"/>
    <property type="evidence" value="ECO:0000314"/>
    <property type="project" value="MTBBASE"/>
</dbReference>
<dbReference type="CDD" id="cd17341">
    <property type="entry name" value="MFS_NRT2_like"/>
    <property type="match status" value="1"/>
</dbReference>
<dbReference type="Gene3D" id="1.20.1250.20">
    <property type="entry name" value="MFS general substrate transporter like domains"/>
    <property type="match status" value="2"/>
</dbReference>
<dbReference type="InterPro" id="IPR011701">
    <property type="entry name" value="MFS"/>
</dbReference>
<dbReference type="InterPro" id="IPR020846">
    <property type="entry name" value="MFS_dom"/>
</dbReference>
<dbReference type="InterPro" id="IPR036259">
    <property type="entry name" value="MFS_trans_sf"/>
</dbReference>
<dbReference type="InterPro" id="IPR044772">
    <property type="entry name" value="NO3_transporter"/>
</dbReference>
<dbReference type="PANTHER" id="PTHR23515">
    <property type="entry name" value="HIGH-AFFINITY NITRATE TRANSPORTER 2.3"/>
    <property type="match status" value="1"/>
</dbReference>
<dbReference type="Pfam" id="PF07690">
    <property type="entry name" value="MFS_1"/>
    <property type="match status" value="1"/>
</dbReference>
<dbReference type="SUPFAM" id="SSF103473">
    <property type="entry name" value="MFS general substrate transporter"/>
    <property type="match status" value="1"/>
</dbReference>
<dbReference type="PROSITE" id="PS50850">
    <property type="entry name" value="MFS"/>
    <property type="match status" value="1"/>
</dbReference>
<comment type="function">
    <text evidence="4">Permits nitrate and nitrate transport into E.coli.</text>
</comment>
<comment type="function">
    <text evidence="4">Involved in excretion of nitrite produced by the dissimilatory reduction of nitrate.</text>
</comment>
<comment type="activity regulation">
    <text>Increased nitrate reductase activity is seen under hypoxic conditions, however this seems to be due to induction of the probable nitrate/nitrite transporter narK2 rather than increased enzyme activity of the probable nitrate reductase NarGHJI.</text>
</comment>
<comment type="subcellular location">
    <subcellularLocation>
        <location evidence="8">Cell membrane</location>
        <topology evidence="8">Multi-pass membrane protein</topology>
    </subcellularLocation>
</comment>
<comment type="induction">
    <text evidence="2 3 4 5 6">A member of the dormancy regulon. Induced in response to reduced oxygen tension (hypoxia), low levels of nitric oxide (NO) and carbon monoxide (CO). It is hoped that this regulon will give insight into the latent, or dormant phase of infection. Induction by hypoxia is independent of nitrate and nitrate levels.</text>
</comment>
<comment type="disruption phenotype">
    <text evidence="4">Wild-type levels of nitrite production in aerobic cultures, but hypoxic cultures show no increase in nitrite production.</text>
</comment>
<comment type="biotechnology">
    <text evidence="7">This protein serves as an immunogenic antigen, inducing gamma-interferon responses in whole-blood cultures from M.tuberculosis-exposed adults in Uganda, The Gambia and South Africa, indicating this might be a good vaccine candidate.</text>
</comment>
<comment type="miscellaneous">
    <text>One of the activities induced in M.tuberculosis by hypoxia is the dissimilatory reduction of nitrate to nitrite, which serves to provide energy as the bacteria adapt to anaerobiosis.</text>
</comment>
<comment type="similarity">
    <text evidence="8">Belongs to the major facilitator superfamily. Nitrate/nitrite porter (TC 2.A.1.8) family.</text>
</comment>
<sequence>MRGQAANLVLATWISVVNFWAWNLIGPLSTSYARDMSLSSAEASLLVATPILVGALGRIVTGPLTDRFGGRAMLIAVTLASILPVLAVGVAATMGSYALLVFFGLFLGVAGTIFAVGIPFANNWYQPARRGFSTGVFGMGMVGTALSAFFTPRFVRWFGLFTTHAIVAAALASTAVVAMVVLRDAPYFRPNADPVLPRLKAAARLPVTWEMSFLYAIVFGGFVAFSNYLPTYITTIYGFSTVDAGARTAGFALAAVLARPVGGWLSDRIAPRHVVLASLAGTALLAFAAALQPPPEVWSAATFITLAVCLGVGTGGVFAWVARRAPAASVGSVTGIVAAAGGLGGYFPPLVMGATYDPVDNDYTVGLLLLVATALVACTYTALHAREPVSEEASR</sequence>
<keyword id="KW-1003">Cell membrane</keyword>
<keyword id="KW-0472">Membrane</keyword>
<keyword id="KW-0534">Nitrate assimilation</keyword>
<keyword id="KW-1185">Reference proteome</keyword>
<keyword id="KW-0812">Transmembrane</keyword>
<keyword id="KW-1133">Transmembrane helix</keyword>
<keyword id="KW-0813">Transport</keyword>